<evidence type="ECO:0000250" key="1">
    <source>
        <dbReference type="UniProtKB" id="P00442"/>
    </source>
</evidence>
<evidence type="ECO:0000250" key="2">
    <source>
        <dbReference type="UniProtKB" id="P00445"/>
    </source>
</evidence>
<evidence type="ECO:0000250" key="3">
    <source>
        <dbReference type="UniProtKB" id="P85978"/>
    </source>
</evidence>
<evidence type="ECO:0000305" key="4"/>
<proteinExistence type="evidence at transcript level"/>
<dbReference type="EC" id="1.15.1.1" evidence="3"/>
<dbReference type="EMBL" id="AF128886">
    <property type="protein sequence ID" value="AAD42060.1"/>
    <property type="molecule type" value="mRNA"/>
</dbReference>
<dbReference type="EMBL" id="AF281057">
    <property type="protein sequence ID" value="AAL38991.1"/>
    <property type="molecule type" value="Genomic_DNA"/>
</dbReference>
<dbReference type="EMBL" id="AAHF01000003">
    <property type="protein sequence ID" value="EAL91677.1"/>
    <property type="status" value="ALT_SEQ"/>
    <property type="molecule type" value="Genomic_DNA"/>
</dbReference>
<dbReference type="RefSeq" id="XP_753715.1">
    <property type="nucleotide sequence ID" value="XM_748622.1"/>
</dbReference>
<dbReference type="SMR" id="Q9Y8D9"/>
<dbReference type="FunCoup" id="Q9Y8D9">
    <property type="interactions" value="791"/>
</dbReference>
<dbReference type="STRING" id="330879.Q9Y8D9"/>
<dbReference type="GeneID" id="3511006"/>
<dbReference type="KEGG" id="afm:AFUA_5G09240"/>
<dbReference type="VEuPathDB" id="FungiDB:Afu5g09240"/>
<dbReference type="eggNOG" id="KOG0441">
    <property type="taxonomic scope" value="Eukaryota"/>
</dbReference>
<dbReference type="HOGENOM" id="CLU_056632_4_1_1"/>
<dbReference type="InParanoid" id="Q9Y8D9"/>
<dbReference type="OrthoDB" id="2015551at2759"/>
<dbReference type="BRENDA" id="1.15.1.1">
    <property type="organism ID" value="508"/>
</dbReference>
<dbReference type="Proteomes" id="UP000002530">
    <property type="component" value="Chromosome 5"/>
</dbReference>
<dbReference type="GO" id="GO:0005737">
    <property type="term" value="C:cytoplasm"/>
    <property type="evidence" value="ECO:0007669"/>
    <property type="project" value="UniProtKB-SubCell"/>
</dbReference>
<dbReference type="GO" id="GO:0005507">
    <property type="term" value="F:copper ion binding"/>
    <property type="evidence" value="ECO:0000318"/>
    <property type="project" value="GO_Central"/>
</dbReference>
<dbReference type="GO" id="GO:0004784">
    <property type="term" value="F:superoxide dismutase activity"/>
    <property type="evidence" value="ECO:0000318"/>
    <property type="project" value="GO_Central"/>
</dbReference>
<dbReference type="GO" id="GO:0019430">
    <property type="term" value="P:removal of superoxide radicals"/>
    <property type="evidence" value="ECO:0000318"/>
    <property type="project" value="GO_Central"/>
</dbReference>
<dbReference type="CDD" id="cd00305">
    <property type="entry name" value="Cu-Zn_Superoxide_Dismutase"/>
    <property type="match status" value="1"/>
</dbReference>
<dbReference type="FunFam" id="2.60.40.200:FF:000001">
    <property type="entry name" value="Superoxide dismutase [Cu-Zn]"/>
    <property type="match status" value="1"/>
</dbReference>
<dbReference type="Gene3D" id="2.60.40.200">
    <property type="entry name" value="Superoxide dismutase, copper/zinc binding domain"/>
    <property type="match status" value="1"/>
</dbReference>
<dbReference type="InterPro" id="IPR036423">
    <property type="entry name" value="SOD-like_Cu/Zn_dom_sf"/>
</dbReference>
<dbReference type="InterPro" id="IPR024134">
    <property type="entry name" value="SOD_Cu/Zn_/chaperone"/>
</dbReference>
<dbReference type="InterPro" id="IPR018152">
    <property type="entry name" value="SOD_Cu/Zn_BS"/>
</dbReference>
<dbReference type="InterPro" id="IPR001424">
    <property type="entry name" value="SOD_Cu_Zn_dom"/>
</dbReference>
<dbReference type="PANTHER" id="PTHR10003">
    <property type="entry name" value="SUPEROXIDE DISMUTASE CU-ZN -RELATED"/>
    <property type="match status" value="1"/>
</dbReference>
<dbReference type="Pfam" id="PF00080">
    <property type="entry name" value="Sod_Cu"/>
    <property type="match status" value="1"/>
</dbReference>
<dbReference type="PRINTS" id="PR00068">
    <property type="entry name" value="CUZNDISMTASE"/>
</dbReference>
<dbReference type="SUPFAM" id="SSF49329">
    <property type="entry name" value="Cu,Zn superoxide dismutase-like"/>
    <property type="match status" value="1"/>
</dbReference>
<dbReference type="PROSITE" id="PS00087">
    <property type="entry name" value="SOD_CU_ZN_1"/>
    <property type="match status" value="1"/>
</dbReference>
<dbReference type="PROSITE" id="PS00332">
    <property type="entry name" value="SOD_CU_ZN_2"/>
    <property type="match status" value="1"/>
</dbReference>
<reference key="1">
    <citation type="journal article" date="2000" name="J. Clin. Microbiol.">
        <title>Production and characterization of recombinant Aspergillus fumigatus Cu,Zn superoxide dismutase and its recognition by immune human sera.</title>
        <authorList>
            <person name="Holdom M.D."/>
            <person name="Lechenne B."/>
            <person name="Hay R.J."/>
            <person name="Hamilton A.J."/>
            <person name="Monod M."/>
        </authorList>
    </citation>
    <scope>NUCLEOTIDE SEQUENCE [MRNA]</scope>
</reference>
<reference key="2">
    <citation type="submission" date="2000-06" db="EMBL/GenBank/DDBJ databases">
        <title>Homogeneity in 3-dimensional structure of Cu,Zn superoxide dismutases of Aspergillus fumigatus, Aspergillus flavus and Aspergillus nidulans.</title>
        <authorList>
            <person name="Holdom M.D."/>
            <person name="Hobby P."/>
            <person name="Lechenne B."/>
            <person name="Zaugg C."/>
            <person name="Sutton B."/>
            <person name="Monod M."/>
            <person name="Hamilton A.J."/>
        </authorList>
    </citation>
    <scope>NUCLEOTIDE SEQUENCE [GENOMIC DNA]</scope>
</reference>
<reference key="3">
    <citation type="journal article" date="2005" name="Nature">
        <title>Genomic sequence of the pathogenic and allergenic filamentous fungus Aspergillus fumigatus.</title>
        <authorList>
            <person name="Nierman W.C."/>
            <person name="Pain A."/>
            <person name="Anderson M.J."/>
            <person name="Wortman J.R."/>
            <person name="Kim H.S."/>
            <person name="Arroyo J."/>
            <person name="Berriman M."/>
            <person name="Abe K."/>
            <person name="Archer D.B."/>
            <person name="Bermejo C."/>
            <person name="Bennett J.W."/>
            <person name="Bowyer P."/>
            <person name="Chen D."/>
            <person name="Collins M."/>
            <person name="Coulsen R."/>
            <person name="Davies R."/>
            <person name="Dyer P.S."/>
            <person name="Farman M.L."/>
            <person name="Fedorova N."/>
            <person name="Fedorova N.D."/>
            <person name="Feldblyum T.V."/>
            <person name="Fischer R."/>
            <person name="Fosker N."/>
            <person name="Fraser A."/>
            <person name="Garcia J.L."/>
            <person name="Garcia M.J."/>
            <person name="Goble A."/>
            <person name="Goldman G.H."/>
            <person name="Gomi K."/>
            <person name="Griffith-Jones S."/>
            <person name="Gwilliam R."/>
            <person name="Haas B.J."/>
            <person name="Haas H."/>
            <person name="Harris D.E."/>
            <person name="Horiuchi H."/>
            <person name="Huang J."/>
            <person name="Humphray S."/>
            <person name="Jimenez J."/>
            <person name="Keller N."/>
            <person name="Khouri H."/>
            <person name="Kitamoto K."/>
            <person name="Kobayashi T."/>
            <person name="Konzack S."/>
            <person name="Kulkarni R."/>
            <person name="Kumagai T."/>
            <person name="Lafton A."/>
            <person name="Latge J.-P."/>
            <person name="Li W."/>
            <person name="Lord A."/>
            <person name="Lu C."/>
            <person name="Majoros W.H."/>
            <person name="May G.S."/>
            <person name="Miller B.L."/>
            <person name="Mohamoud Y."/>
            <person name="Molina M."/>
            <person name="Monod M."/>
            <person name="Mouyna I."/>
            <person name="Mulligan S."/>
            <person name="Murphy L.D."/>
            <person name="O'Neil S."/>
            <person name="Paulsen I."/>
            <person name="Penalva M.A."/>
            <person name="Pertea M."/>
            <person name="Price C."/>
            <person name="Pritchard B.L."/>
            <person name="Quail M.A."/>
            <person name="Rabbinowitsch E."/>
            <person name="Rawlins N."/>
            <person name="Rajandream M.A."/>
            <person name="Reichard U."/>
            <person name="Renauld H."/>
            <person name="Robson G.D."/>
            <person name="Rodriguez de Cordoba S."/>
            <person name="Rodriguez-Pena J.M."/>
            <person name="Ronning C.M."/>
            <person name="Rutter S."/>
            <person name="Salzberg S.L."/>
            <person name="Sanchez M."/>
            <person name="Sanchez-Ferrero J.C."/>
            <person name="Saunders D."/>
            <person name="Seeger K."/>
            <person name="Squares R."/>
            <person name="Squares S."/>
            <person name="Takeuchi M."/>
            <person name="Tekaia F."/>
            <person name="Turner G."/>
            <person name="Vazquez de Aldana C.R."/>
            <person name="Weidman J."/>
            <person name="White O."/>
            <person name="Woodward J.R."/>
            <person name="Yu J.-H."/>
            <person name="Fraser C.M."/>
            <person name="Galagan J.E."/>
            <person name="Asai K."/>
            <person name="Machida M."/>
            <person name="Hall N."/>
            <person name="Barrell B.G."/>
            <person name="Denning D.W."/>
        </authorList>
    </citation>
    <scope>NUCLEOTIDE SEQUENCE [LARGE SCALE GENOMIC DNA]</scope>
    <source>
        <strain>ATCC MYA-4609 / CBS 101355 / FGSC A1100 / Af293</strain>
    </source>
</reference>
<feature type="initiator methionine" description="Removed" evidence="2">
    <location>
        <position position="1"/>
    </location>
</feature>
<feature type="chain" id="PRO_0000164108" description="Superoxide dismutase [Cu-Zn]">
    <location>
        <begin position="2"/>
        <end position="154"/>
    </location>
</feature>
<feature type="binding site" evidence="2">
    <location>
        <position position="47"/>
    </location>
    <ligand>
        <name>Cu cation</name>
        <dbReference type="ChEBI" id="CHEBI:23378"/>
        <note>catalytic</note>
    </ligand>
</feature>
<feature type="binding site" evidence="2">
    <location>
        <position position="49"/>
    </location>
    <ligand>
        <name>Cu cation</name>
        <dbReference type="ChEBI" id="CHEBI:23378"/>
        <note>catalytic</note>
    </ligand>
</feature>
<feature type="binding site" evidence="2">
    <location>
        <position position="64"/>
    </location>
    <ligand>
        <name>Cu cation</name>
        <dbReference type="ChEBI" id="CHEBI:23378"/>
        <note>catalytic</note>
    </ligand>
</feature>
<feature type="binding site" evidence="2">
    <location>
        <position position="64"/>
    </location>
    <ligand>
        <name>Zn(2+)</name>
        <dbReference type="ChEBI" id="CHEBI:29105"/>
        <note>structural</note>
    </ligand>
</feature>
<feature type="binding site" evidence="2">
    <location>
        <position position="72"/>
    </location>
    <ligand>
        <name>Zn(2+)</name>
        <dbReference type="ChEBI" id="CHEBI:29105"/>
        <note>structural</note>
    </ligand>
</feature>
<feature type="binding site" evidence="2">
    <location>
        <position position="81"/>
    </location>
    <ligand>
        <name>Zn(2+)</name>
        <dbReference type="ChEBI" id="CHEBI:29105"/>
        <note>structural</note>
    </ligand>
</feature>
<feature type="binding site" evidence="2">
    <location>
        <position position="84"/>
    </location>
    <ligand>
        <name>Zn(2+)</name>
        <dbReference type="ChEBI" id="CHEBI:29105"/>
        <note>structural</note>
    </ligand>
</feature>
<feature type="binding site" evidence="2">
    <location>
        <position position="121"/>
    </location>
    <ligand>
        <name>Cu cation</name>
        <dbReference type="ChEBI" id="CHEBI:23378"/>
        <note>catalytic</note>
    </ligand>
</feature>
<feature type="binding site" evidence="2">
    <location>
        <position position="144"/>
    </location>
    <ligand>
        <name>substrate</name>
    </ligand>
</feature>
<feature type="disulfide bond" evidence="2">
    <location>
        <begin position="58"/>
        <end position="147"/>
    </location>
</feature>
<feature type="sequence conflict" description="In Ref. 2; AAL38991." evidence="4" ref="2">
    <location>
        <position position="8"/>
    </location>
</feature>
<protein>
    <recommendedName>
        <fullName>Superoxide dismutase [Cu-Zn]</fullName>
        <ecNumber evidence="3">1.15.1.1</ecNumber>
    </recommendedName>
</protein>
<accession>Q9Y8D9</accession>
<accession>Q4WUP9</accession>
<accession>Q8X1S8</accession>
<organism>
    <name type="scientific">Aspergillus fumigatus (strain ATCC MYA-4609 / CBS 101355 / FGSC A1100 / Af293)</name>
    <name type="common">Neosartorya fumigata</name>
    <dbReference type="NCBI Taxonomy" id="330879"/>
    <lineage>
        <taxon>Eukaryota</taxon>
        <taxon>Fungi</taxon>
        <taxon>Dikarya</taxon>
        <taxon>Ascomycota</taxon>
        <taxon>Pezizomycotina</taxon>
        <taxon>Eurotiomycetes</taxon>
        <taxon>Eurotiomycetidae</taxon>
        <taxon>Eurotiales</taxon>
        <taxon>Aspergillaceae</taxon>
        <taxon>Aspergillus</taxon>
        <taxon>Aspergillus subgen. Fumigati</taxon>
    </lineage>
</organism>
<sequence>MVKAVAVLRGDSKITGTVTFEQADENSPTTVSWNIKGNDPNAKRGFHVHQFGDNTNGCTSAGPHFNPYGKTHGAPEDSERHVGDLGNFETDAEGNAVGSKQDKLIKLIGAESVLGRTLVVHAGTDDLGRGGNEESKKTGNAGARPACGVIGIAA</sequence>
<comment type="function">
    <text evidence="1">Destroys radicals which are normally produced within the cells and which are toxic to biological systems.</text>
</comment>
<comment type="catalytic activity">
    <reaction evidence="3">
        <text>2 superoxide + 2 H(+) = H2O2 + O2</text>
        <dbReference type="Rhea" id="RHEA:20696"/>
        <dbReference type="ChEBI" id="CHEBI:15378"/>
        <dbReference type="ChEBI" id="CHEBI:15379"/>
        <dbReference type="ChEBI" id="CHEBI:16240"/>
        <dbReference type="ChEBI" id="CHEBI:18421"/>
        <dbReference type="EC" id="1.15.1.1"/>
    </reaction>
</comment>
<comment type="cofactor">
    <cofactor evidence="2">
        <name>Cu cation</name>
        <dbReference type="ChEBI" id="CHEBI:23378"/>
    </cofactor>
    <text evidence="2">Binds 1 copper ion per subunit.</text>
</comment>
<comment type="cofactor">
    <cofactor evidence="2">
        <name>Zn(2+)</name>
        <dbReference type="ChEBI" id="CHEBI:29105"/>
    </cofactor>
    <text evidence="2">Binds 1 zinc ion per subunit.</text>
</comment>
<comment type="subunit">
    <text evidence="3">Homodimer.</text>
</comment>
<comment type="subcellular location">
    <subcellularLocation>
        <location evidence="2">Cytoplasm</location>
    </subcellularLocation>
</comment>
<comment type="similarity">
    <text evidence="4">Belongs to the Cu-Zn superoxide dismutase family.</text>
</comment>
<comment type="sequence caution" evidence="4">
    <conflict type="erroneous gene model prediction">
        <sequence resource="EMBL-CDS" id="EAL91677"/>
    </conflict>
</comment>
<name>SODC_ASPFU</name>
<gene>
    <name type="primary">sodC</name>
    <name type="ORF">AFUA_5G09240</name>
</gene>
<keyword id="KW-0049">Antioxidant</keyword>
<keyword id="KW-0186">Copper</keyword>
<keyword id="KW-0963">Cytoplasm</keyword>
<keyword id="KW-1015">Disulfide bond</keyword>
<keyword id="KW-0479">Metal-binding</keyword>
<keyword id="KW-0560">Oxidoreductase</keyword>
<keyword id="KW-1185">Reference proteome</keyword>
<keyword id="KW-0862">Zinc</keyword>